<reference key="1">
    <citation type="journal article" date="2005" name="Science">
        <title>The transcriptional landscape of the mammalian genome.</title>
        <authorList>
            <person name="Carninci P."/>
            <person name="Kasukawa T."/>
            <person name="Katayama S."/>
            <person name="Gough J."/>
            <person name="Frith M.C."/>
            <person name="Maeda N."/>
            <person name="Oyama R."/>
            <person name="Ravasi T."/>
            <person name="Lenhard B."/>
            <person name="Wells C."/>
            <person name="Kodzius R."/>
            <person name="Shimokawa K."/>
            <person name="Bajic V.B."/>
            <person name="Brenner S.E."/>
            <person name="Batalov S."/>
            <person name="Forrest A.R."/>
            <person name="Zavolan M."/>
            <person name="Davis M.J."/>
            <person name="Wilming L.G."/>
            <person name="Aidinis V."/>
            <person name="Allen J.E."/>
            <person name="Ambesi-Impiombato A."/>
            <person name="Apweiler R."/>
            <person name="Aturaliya R.N."/>
            <person name="Bailey T.L."/>
            <person name="Bansal M."/>
            <person name="Baxter L."/>
            <person name="Beisel K.W."/>
            <person name="Bersano T."/>
            <person name="Bono H."/>
            <person name="Chalk A.M."/>
            <person name="Chiu K.P."/>
            <person name="Choudhary V."/>
            <person name="Christoffels A."/>
            <person name="Clutterbuck D.R."/>
            <person name="Crowe M.L."/>
            <person name="Dalla E."/>
            <person name="Dalrymple B.P."/>
            <person name="de Bono B."/>
            <person name="Della Gatta G."/>
            <person name="di Bernardo D."/>
            <person name="Down T."/>
            <person name="Engstrom P."/>
            <person name="Fagiolini M."/>
            <person name="Faulkner G."/>
            <person name="Fletcher C.F."/>
            <person name="Fukushima T."/>
            <person name="Furuno M."/>
            <person name="Futaki S."/>
            <person name="Gariboldi M."/>
            <person name="Georgii-Hemming P."/>
            <person name="Gingeras T.R."/>
            <person name="Gojobori T."/>
            <person name="Green R.E."/>
            <person name="Gustincich S."/>
            <person name="Harbers M."/>
            <person name="Hayashi Y."/>
            <person name="Hensch T.K."/>
            <person name="Hirokawa N."/>
            <person name="Hill D."/>
            <person name="Huminiecki L."/>
            <person name="Iacono M."/>
            <person name="Ikeo K."/>
            <person name="Iwama A."/>
            <person name="Ishikawa T."/>
            <person name="Jakt M."/>
            <person name="Kanapin A."/>
            <person name="Katoh M."/>
            <person name="Kawasawa Y."/>
            <person name="Kelso J."/>
            <person name="Kitamura H."/>
            <person name="Kitano H."/>
            <person name="Kollias G."/>
            <person name="Krishnan S.P."/>
            <person name="Kruger A."/>
            <person name="Kummerfeld S.K."/>
            <person name="Kurochkin I.V."/>
            <person name="Lareau L.F."/>
            <person name="Lazarevic D."/>
            <person name="Lipovich L."/>
            <person name="Liu J."/>
            <person name="Liuni S."/>
            <person name="McWilliam S."/>
            <person name="Madan Babu M."/>
            <person name="Madera M."/>
            <person name="Marchionni L."/>
            <person name="Matsuda H."/>
            <person name="Matsuzawa S."/>
            <person name="Miki H."/>
            <person name="Mignone F."/>
            <person name="Miyake S."/>
            <person name="Morris K."/>
            <person name="Mottagui-Tabar S."/>
            <person name="Mulder N."/>
            <person name="Nakano N."/>
            <person name="Nakauchi H."/>
            <person name="Ng P."/>
            <person name="Nilsson R."/>
            <person name="Nishiguchi S."/>
            <person name="Nishikawa S."/>
            <person name="Nori F."/>
            <person name="Ohara O."/>
            <person name="Okazaki Y."/>
            <person name="Orlando V."/>
            <person name="Pang K.C."/>
            <person name="Pavan W.J."/>
            <person name="Pavesi G."/>
            <person name="Pesole G."/>
            <person name="Petrovsky N."/>
            <person name="Piazza S."/>
            <person name="Reed J."/>
            <person name="Reid J.F."/>
            <person name="Ring B.Z."/>
            <person name="Ringwald M."/>
            <person name="Rost B."/>
            <person name="Ruan Y."/>
            <person name="Salzberg S.L."/>
            <person name="Sandelin A."/>
            <person name="Schneider C."/>
            <person name="Schoenbach C."/>
            <person name="Sekiguchi K."/>
            <person name="Semple C.A."/>
            <person name="Seno S."/>
            <person name="Sessa L."/>
            <person name="Sheng Y."/>
            <person name="Shibata Y."/>
            <person name="Shimada H."/>
            <person name="Shimada K."/>
            <person name="Silva D."/>
            <person name="Sinclair B."/>
            <person name="Sperling S."/>
            <person name="Stupka E."/>
            <person name="Sugiura K."/>
            <person name="Sultana R."/>
            <person name="Takenaka Y."/>
            <person name="Taki K."/>
            <person name="Tammoja K."/>
            <person name="Tan S.L."/>
            <person name="Tang S."/>
            <person name="Taylor M.S."/>
            <person name="Tegner J."/>
            <person name="Teichmann S.A."/>
            <person name="Ueda H.R."/>
            <person name="van Nimwegen E."/>
            <person name="Verardo R."/>
            <person name="Wei C.L."/>
            <person name="Yagi K."/>
            <person name="Yamanishi H."/>
            <person name="Zabarovsky E."/>
            <person name="Zhu S."/>
            <person name="Zimmer A."/>
            <person name="Hide W."/>
            <person name="Bult C."/>
            <person name="Grimmond S.M."/>
            <person name="Teasdale R.D."/>
            <person name="Liu E.T."/>
            <person name="Brusic V."/>
            <person name="Quackenbush J."/>
            <person name="Wahlestedt C."/>
            <person name="Mattick J.S."/>
            <person name="Hume D.A."/>
            <person name="Kai C."/>
            <person name="Sasaki D."/>
            <person name="Tomaru Y."/>
            <person name="Fukuda S."/>
            <person name="Kanamori-Katayama M."/>
            <person name="Suzuki M."/>
            <person name="Aoki J."/>
            <person name="Arakawa T."/>
            <person name="Iida J."/>
            <person name="Imamura K."/>
            <person name="Itoh M."/>
            <person name="Kato T."/>
            <person name="Kawaji H."/>
            <person name="Kawagashira N."/>
            <person name="Kawashima T."/>
            <person name="Kojima M."/>
            <person name="Kondo S."/>
            <person name="Konno H."/>
            <person name="Nakano K."/>
            <person name="Ninomiya N."/>
            <person name="Nishio T."/>
            <person name="Okada M."/>
            <person name="Plessy C."/>
            <person name="Shibata K."/>
            <person name="Shiraki T."/>
            <person name="Suzuki S."/>
            <person name="Tagami M."/>
            <person name="Waki K."/>
            <person name="Watahiki A."/>
            <person name="Okamura-Oho Y."/>
            <person name="Suzuki H."/>
            <person name="Kawai J."/>
            <person name="Hayashizaki Y."/>
        </authorList>
    </citation>
    <scope>NUCLEOTIDE SEQUENCE [LARGE SCALE MRNA]</scope>
    <source>
        <strain>C57BL/6J</strain>
        <tissue>Urinary bladder</tissue>
    </source>
</reference>
<reference key="2">
    <citation type="journal article" date="2004" name="Genome Res.">
        <title>The status, quality, and expansion of the NIH full-length cDNA project: the Mammalian Gene Collection (MGC).</title>
        <authorList>
            <consortium name="The MGC Project Team"/>
        </authorList>
    </citation>
    <scope>NUCLEOTIDE SEQUENCE [LARGE SCALE MRNA]</scope>
    <source>
        <strain>Czech II</strain>
    </source>
</reference>
<reference key="3">
    <citation type="journal article" date="2008" name="Proc. Natl. Acad. Sci. U.S.A.">
        <title>Transcriptome-based systematic identification of extracellular matrix proteins.</title>
        <authorList>
            <person name="Manabe R."/>
            <person name="Tsutsui K."/>
            <person name="Yamada T."/>
            <person name="Kimura M."/>
            <person name="Nakano I."/>
            <person name="Shimono C."/>
            <person name="Sanzen N."/>
            <person name="Furutani Y."/>
            <person name="Fukuda T."/>
            <person name="Oguri Y."/>
            <person name="Shimamoto K."/>
            <person name="Kiyozumi D."/>
            <person name="Sato Y."/>
            <person name="Sado Y."/>
            <person name="Senoo H."/>
            <person name="Yamashina S."/>
            <person name="Fukuda S."/>
            <person name="Kawai J."/>
            <person name="Sugiura N."/>
            <person name="Kimata K."/>
            <person name="Hayashizaki Y."/>
            <person name="Sekiguchi K."/>
        </authorList>
    </citation>
    <scope>GLYCOSYLATION</scope>
    <scope>SUBCELLULAR LOCATION</scope>
    <scope>DEVELOPMENTAL STAGE</scope>
</reference>
<gene>
    <name type="primary">Mamdc2</name>
</gene>
<comment type="subcellular location">
    <subcellularLocation>
        <location evidence="4">Secreted</location>
        <location evidence="4">Extracellular space</location>
        <location evidence="4">Extracellular matrix</location>
    </subcellularLocation>
</comment>
<comment type="developmental stage">
    <text evidence="4">At 16.5 dpc, present in rib cartilage (at protein level).</text>
</comment>
<comment type="PTM">
    <text evidence="4">O-glycosylated; contains chondroitin sulfate.</text>
</comment>
<sequence>MLLEGVLLVVQALQLASALDLPAGSCAFEEDTCGFDSVFAFLPWILNEEGHYVYMDTSFARQGEKAVLLSSDLQAEEWNCLRLVYQITTPPGSVSDPSQLNLYVRFEDESFDRLLWSTKEPSDSWLIASLDLQNTSKKFKILIEGVLGQGNTASIALFEIKMTAGYCIECDFEENHLCGFVNRWNPNVNWFVGGGTAKNTHSVLPQDHTFRSEHGHYMYVDSVYVKHFQEVAQLISPVTTASMSGCLSFYYQLQQGNDNVFSVYTRDMAGLYEEIWKVDSPGNAAWNLAEVEFSAPYPMEVIFEVAFNGPKGGYVALDDISFSPVHCQNQTGLPFSAVETSCDFEIGLCNFYQDKEGPGWTRVRVKANMYRAGDHTTGTGHYLLANTKFTSQPGYIGRLYGPSLPGNMQYCVRFHYAIFGFLKMSDTLAVYIFEENHVVQEKIWSVLESPRGVWMQAEISFKKPMPTKVVFMSLCKSFWDCGLVALDDITIQLGNCRSPARLPPPPGECTFDQDECAFTQEKRNRSSWHRGRGETPTSYTGPKGDHTTGVGYYMYIEASHMVYGQKAHLLSQPLRGVPGKHCLTFFYHMYGAGTGLLSVYLKREEDSEESLLWRRRGEQSISWLRALVEYSCRRRHQIIFEATRGVSIRSDIAIDDVKLQAGPCAGMEDTTEQSSGYSEDLNEIEY</sequence>
<accession>Q8CG85</accession>
<accession>Q8BM24</accession>
<protein>
    <recommendedName>
        <fullName>MAM domain-containing protein 2</fullName>
    </recommendedName>
    <alternativeName>
        <fullName>MAM domain-containing proteoglycan</fullName>
        <shortName>Mamcan</shortName>
    </alternativeName>
</protein>
<evidence type="ECO:0000255" key="1"/>
<evidence type="ECO:0000255" key="2">
    <source>
        <dbReference type="PROSITE-ProRule" id="PRU00128"/>
    </source>
</evidence>
<evidence type="ECO:0000256" key="3">
    <source>
        <dbReference type="SAM" id="MobiDB-lite"/>
    </source>
</evidence>
<evidence type="ECO:0000269" key="4">
    <source>
    </source>
</evidence>
<evidence type="ECO:0000305" key="5"/>
<organism>
    <name type="scientific">Mus musculus</name>
    <name type="common">Mouse</name>
    <dbReference type="NCBI Taxonomy" id="10090"/>
    <lineage>
        <taxon>Eukaryota</taxon>
        <taxon>Metazoa</taxon>
        <taxon>Chordata</taxon>
        <taxon>Craniata</taxon>
        <taxon>Vertebrata</taxon>
        <taxon>Euteleostomi</taxon>
        <taxon>Mammalia</taxon>
        <taxon>Eutheria</taxon>
        <taxon>Euarchontoglires</taxon>
        <taxon>Glires</taxon>
        <taxon>Rodentia</taxon>
        <taxon>Myomorpha</taxon>
        <taxon>Muroidea</taxon>
        <taxon>Muridae</taxon>
        <taxon>Murinae</taxon>
        <taxon>Mus</taxon>
        <taxon>Mus</taxon>
    </lineage>
</organism>
<feature type="signal peptide" evidence="1">
    <location>
        <begin position="1"/>
        <end position="18"/>
    </location>
</feature>
<feature type="chain" id="PRO_0000014863" description="MAM domain-containing protein 2">
    <location>
        <begin position="19"/>
        <end position="686"/>
    </location>
</feature>
<feature type="domain" description="MAM 1" evidence="2">
    <location>
        <begin position="24"/>
        <end position="169"/>
    </location>
</feature>
<feature type="domain" description="MAM 2" evidence="2">
    <location>
        <begin position="168"/>
        <end position="329"/>
    </location>
</feature>
<feature type="domain" description="MAM 3" evidence="2">
    <location>
        <begin position="340"/>
        <end position="498"/>
    </location>
</feature>
<feature type="domain" description="MAM 4" evidence="2">
    <location>
        <begin position="507"/>
        <end position="666"/>
    </location>
</feature>
<feature type="region of interest" description="Disordered" evidence="3">
    <location>
        <begin position="665"/>
        <end position="686"/>
    </location>
</feature>
<feature type="glycosylation site" description="N-linked (GlcNAc...) asparagine" evidence="1">
    <location>
        <position position="134"/>
    </location>
</feature>
<feature type="glycosylation site" description="N-linked (GlcNAc...) asparagine" evidence="1">
    <location>
        <position position="329"/>
    </location>
</feature>
<feature type="glycosylation site" description="N-linked (GlcNAc...) asparagine" evidence="1">
    <location>
        <position position="524"/>
    </location>
</feature>
<feature type="sequence conflict" description="In Ref. 1; BAC29108." evidence="5" ref="1">
    <original>S</original>
    <variation>N</variation>
    <location>
        <position position="17"/>
    </location>
</feature>
<feature type="sequence conflict" description="In Ref. 1; BAC29108." evidence="5" ref="1">
    <original>T</original>
    <variation>S</variation>
    <location>
        <position position="135"/>
    </location>
</feature>
<feature type="sequence conflict" description="In Ref. 1; BAC29108." evidence="5" ref="1">
    <original>V</original>
    <variation>I</variation>
    <location>
        <position position="203"/>
    </location>
</feature>
<keyword id="KW-0272">Extracellular matrix</keyword>
<keyword id="KW-0325">Glycoprotein</keyword>
<keyword id="KW-1185">Reference proteome</keyword>
<keyword id="KW-0677">Repeat</keyword>
<keyword id="KW-0964">Secreted</keyword>
<keyword id="KW-0732">Signal</keyword>
<dbReference type="EMBL" id="AK035566">
    <property type="protein sequence ID" value="BAC29108.1"/>
    <property type="molecule type" value="mRNA"/>
</dbReference>
<dbReference type="EMBL" id="BC042773">
    <property type="protein sequence ID" value="AAH42773.1"/>
    <property type="molecule type" value="mRNA"/>
</dbReference>
<dbReference type="CCDS" id="CCDS29707.1"/>
<dbReference type="RefSeq" id="NP_777282.1">
    <property type="nucleotide sequence ID" value="NM_174857.3"/>
</dbReference>
<dbReference type="SMR" id="Q8CG85"/>
<dbReference type="FunCoup" id="Q8CG85">
    <property type="interactions" value="132"/>
</dbReference>
<dbReference type="STRING" id="10090.ENSMUSP00000045432"/>
<dbReference type="GlyCosmos" id="Q8CG85">
    <property type="glycosylation" value="3 sites, No reported glycans"/>
</dbReference>
<dbReference type="GlyGen" id="Q8CG85">
    <property type="glycosylation" value="3 sites"/>
</dbReference>
<dbReference type="iPTMnet" id="Q8CG85"/>
<dbReference type="PhosphoSitePlus" id="Q8CG85"/>
<dbReference type="PaxDb" id="10090-ENSMUSP00000045432"/>
<dbReference type="ProteomicsDB" id="292013"/>
<dbReference type="DNASU" id="71738"/>
<dbReference type="GeneID" id="71738"/>
<dbReference type="KEGG" id="mmu:71738"/>
<dbReference type="AGR" id="MGI:1918988"/>
<dbReference type="CTD" id="256691"/>
<dbReference type="MGI" id="MGI:1918988">
    <property type="gene designation" value="Mamdc2"/>
</dbReference>
<dbReference type="eggNOG" id="ENOG502QVDI">
    <property type="taxonomic scope" value="Eukaryota"/>
</dbReference>
<dbReference type="InParanoid" id="Q8CG85"/>
<dbReference type="OrthoDB" id="10020495at2759"/>
<dbReference type="PhylomeDB" id="Q8CG85"/>
<dbReference type="TreeFam" id="TF330345"/>
<dbReference type="BioGRID-ORCS" id="71738">
    <property type="hits" value="1 hit in 77 CRISPR screens"/>
</dbReference>
<dbReference type="ChiTaRS" id="Mamdc2">
    <property type="organism name" value="mouse"/>
</dbReference>
<dbReference type="PRO" id="PR:Q8CG85"/>
<dbReference type="Proteomes" id="UP000000589">
    <property type="component" value="Unplaced"/>
</dbReference>
<dbReference type="RNAct" id="Q8CG85">
    <property type="molecule type" value="protein"/>
</dbReference>
<dbReference type="GO" id="GO:0031012">
    <property type="term" value="C:extracellular matrix"/>
    <property type="evidence" value="ECO:0000314"/>
    <property type="project" value="MGI"/>
</dbReference>
<dbReference type="GO" id="GO:0005576">
    <property type="term" value="C:extracellular region"/>
    <property type="evidence" value="ECO:0007669"/>
    <property type="project" value="UniProtKB-KW"/>
</dbReference>
<dbReference type="GO" id="GO:0005614">
    <property type="term" value="C:interstitial matrix"/>
    <property type="evidence" value="ECO:0000314"/>
    <property type="project" value="MGI"/>
</dbReference>
<dbReference type="GO" id="GO:0016020">
    <property type="term" value="C:membrane"/>
    <property type="evidence" value="ECO:0007669"/>
    <property type="project" value="InterPro"/>
</dbReference>
<dbReference type="GO" id="GO:0005539">
    <property type="term" value="F:glycosaminoglycan binding"/>
    <property type="evidence" value="ECO:0000314"/>
    <property type="project" value="MGI"/>
</dbReference>
<dbReference type="CDD" id="cd06263">
    <property type="entry name" value="MAM"/>
    <property type="match status" value="4"/>
</dbReference>
<dbReference type="FunFam" id="2.60.120.200:FF:000142">
    <property type="entry name" value="MAM domain-containing protein 2"/>
    <property type="match status" value="1"/>
</dbReference>
<dbReference type="Gene3D" id="2.60.120.200">
    <property type="match status" value="4"/>
</dbReference>
<dbReference type="InterPro" id="IPR013320">
    <property type="entry name" value="ConA-like_dom_sf"/>
</dbReference>
<dbReference type="InterPro" id="IPR000998">
    <property type="entry name" value="MAM_dom"/>
</dbReference>
<dbReference type="InterPro" id="IPR051560">
    <property type="entry name" value="MAM_domain-containing"/>
</dbReference>
<dbReference type="PANTHER" id="PTHR23282">
    <property type="entry name" value="APICAL ENDOSOMAL GLYCOPROTEIN PRECURSOR"/>
    <property type="match status" value="1"/>
</dbReference>
<dbReference type="PANTHER" id="PTHR23282:SF101">
    <property type="entry name" value="MAM DOMAIN-CONTAINING PROTEIN"/>
    <property type="match status" value="1"/>
</dbReference>
<dbReference type="Pfam" id="PF00629">
    <property type="entry name" value="MAM"/>
    <property type="match status" value="4"/>
</dbReference>
<dbReference type="PRINTS" id="PR00020">
    <property type="entry name" value="MAMDOMAIN"/>
</dbReference>
<dbReference type="SMART" id="SM00137">
    <property type="entry name" value="MAM"/>
    <property type="match status" value="4"/>
</dbReference>
<dbReference type="SUPFAM" id="SSF49899">
    <property type="entry name" value="Concanavalin A-like lectins/glucanases"/>
    <property type="match status" value="4"/>
</dbReference>
<dbReference type="PROSITE" id="PS00740">
    <property type="entry name" value="MAM_1"/>
    <property type="match status" value="2"/>
</dbReference>
<dbReference type="PROSITE" id="PS50060">
    <property type="entry name" value="MAM_2"/>
    <property type="match status" value="4"/>
</dbReference>
<name>MAMC2_MOUSE</name>
<proteinExistence type="evidence at protein level"/>